<organism>
    <name type="scientific">Streptococcus agalactiae serotype Ia (strain ATCC 27591 / A909 / CDC SS700)</name>
    <dbReference type="NCBI Taxonomy" id="205921"/>
    <lineage>
        <taxon>Bacteria</taxon>
        <taxon>Bacillati</taxon>
        <taxon>Bacillota</taxon>
        <taxon>Bacilli</taxon>
        <taxon>Lactobacillales</taxon>
        <taxon>Streptococcaceae</taxon>
        <taxon>Streptococcus</taxon>
    </lineage>
</organism>
<name>RS11_STRA1</name>
<reference key="1">
    <citation type="journal article" date="2005" name="Proc. Natl. Acad. Sci. U.S.A.">
        <title>Genome analysis of multiple pathogenic isolates of Streptococcus agalactiae: implications for the microbial 'pan-genome'.</title>
        <authorList>
            <person name="Tettelin H."/>
            <person name="Masignani V."/>
            <person name="Cieslewicz M.J."/>
            <person name="Donati C."/>
            <person name="Medini D."/>
            <person name="Ward N.L."/>
            <person name="Angiuoli S.V."/>
            <person name="Crabtree J."/>
            <person name="Jones A.L."/>
            <person name="Durkin A.S."/>
            <person name="DeBoy R.T."/>
            <person name="Davidsen T.M."/>
            <person name="Mora M."/>
            <person name="Scarselli M."/>
            <person name="Margarit y Ros I."/>
            <person name="Peterson J.D."/>
            <person name="Hauser C.R."/>
            <person name="Sundaram J.P."/>
            <person name="Nelson W.C."/>
            <person name="Madupu R."/>
            <person name="Brinkac L.M."/>
            <person name="Dodson R.J."/>
            <person name="Rosovitz M.J."/>
            <person name="Sullivan S.A."/>
            <person name="Daugherty S.C."/>
            <person name="Haft D.H."/>
            <person name="Selengut J."/>
            <person name="Gwinn M.L."/>
            <person name="Zhou L."/>
            <person name="Zafar N."/>
            <person name="Khouri H."/>
            <person name="Radune D."/>
            <person name="Dimitrov G."/>
            <person name="Watkins K."/>
            <person name="O'Connor K.J."/>
            <person name="Smith S."/>
            <person name="Utterback T.R."/>
            <person name="White O."/>
            <person name="Rubens C.E."/>
            <person name="Grandi G."/>
            <person name="Madoff L.C."/>
            <person name="Kasper D.L."/>
            <person name="Telford J.L."/>
            <person name="Wessels M.R."/>
            <person name="Rappuoli R."/>
            <person name="Fraser C.M."/>
        </authorList>
    </citation>
    <scope>NUCLEOTIDE SEQUENCE [LARGE SCALE GENOMIC DNA]</scope>
    <source>
        <strain>ATCC 27591 / A909 / CDC SS700</strain>
    </source>
</reference>
<gene>
    <name evidence="1" type="primary">rpsK</name>
    <name type="ordered locus">SAK_0115</name>
</gene>
<accession>Q3K3U5</accession>
<evidence type="ECO:0000255" key="1">
    <source>
        <dbReference type="HAMAP-Rule" id="MF_01310"/>
    </source>
</evidence>
<evidence type="ECO:0000305" key="2"/>
<keyword id="KW-0687">Ribonucleoprotein</keyword>
<keyword id="KW-0689">Ribosomal protein</keyword>
<keyword id="KW-0694">RNA-binding</keyword>
<keyword id="KW-0699">rRNA-binding</keyword>
<sequence length="127" mass="13369">MAKPTRKRRVKKNIESGVAHIHATFNNTIVMITDVHGNALAWSSAGALGFKGSRKSTPFAAQMAAEAAAKSAQEHGLKTVEVTVKGPGSGRESAIRALAAAGLEVTAIRDVTPVPHNGARPPKRRRV</sequence>
<comment type="function">
    <text evidence="1">Located on the platform of the 30S subunit, it bridges several disparate RNA helices of the 16S rRNA. Forms part of the Shine-Dalgarno cleft in the 70S ribosome.</text>
</comment>
<comment type="subunit">
    <text evidence="1">Part of the 30S ribosomal subunit. Interacts with proteins S7 and S18. Binds to IF-3.</text>
</comment>
<comment type="similarity">
    <text evidence="1">Belongs to the universal ribosomal protein uS11 family.</text>
</comment>
<comment type="sequence caution" evidence="2">
    <conflict type="erroneous initiation">
        <sequence resource="EMBL-CDS" id="ABA45882"/>
    </conflict>
</comment>
<dbReference type="EMBL" id="CP000114">
    <property type="protein sequence ID" value="ABA45882.1"/>
    <property type="status" value="ALT_INIT"/>
    <property type="molecule type" value="Genomic_DNA"/>
</dbReference>
<dbReference type="RefSeq" id="WP_001118387.1">
    <property type="nucleotide sequence ID" value="NC_007432.1"/>
</dbReference>
<dbReference type="SMR" id="Q3K3U5"/>
<dbReference type="GeneID" id="93825319"/>
<dbReference type="KEGG" id="sak:SAK_0115"/>
<dbReference type="HOGENOM" id="CLU_072439_5_0_9"/>
<dbReference type="GO" id="GO:1990904">
    <property type="term" value="C:ribonucleoprotein complex"/>
    <property type="evidence" value="ECO:0007669"/>
    <property type="project" value="UniProtKB-KW"/>
</dbReference>
<dbReference type="GO" id="GO:0005840">
    <property type="term" value="C:ribosome"/>
    <property type="evidence" value="ECO:0007669"/>
    <property type="project" value="UniProtKB-KW"/>
</dbReference>
<dbReference type="GO" id="GO:0019843">
    <property type="term" value="F:rRNA binding"/>
    <property type="evidence" value="ECO:0007669"/>
    <property type="project" value="UniProtKB-UniRule"/>
</dbReference>
<dbReference type="GO" id="GO:0003735">
    <property type="term" value="F:structural constituent of ribosome"/>
    <property type="evidence" value="ECO:0007669"/>
    <property type="project" value="InterPro"/>
</dbReference>
<dbReference type="GO" id="GO:0006412">
    <property type="term" value="P:translation"/>
    <property type="evidence" value="ECO:0007669"/>
    <property type="project" value="UniProtKB-UniRule"/>
</dbReference>
<dbReference type="FunFam" id="3.30.420.80:FF:000001">
    <property type="entry name" value="30S ribosomal protein S11"/>
    <property type="match status" value="1"/>
</dbReference>
<dbReference type="Gene3D" id="3.30.420.80">
    <property type="entry name" value="Ribosomal protein S11"/>
    <property type="match status" value="1"/>
</dbReference>
<dbReference type="HAMAP" id="MF_01310">
    <property type="entry name" value="Ribosomal_uS11"/>
    <property type="match status" value="1"/>
</dbReference>
<dbReference type="InterPro" id="IPR001971">
    <property type="entry name" value="Ribosomal_uS11"/>
</dbReference>
<dbReference type="InterPro" id="IPR019981">
    <property type="entry name" value="Ribosomal_uS11_bac-type"/>
</dbReference>
<dbReference type="InterPro" id="IPR018102">
    <property type="entry name" value="Ribosomal_uS11_CS"/>
</dbReference>
<dbReference type="InterPro" id="IPR036967">
    <property type="entry name" value="Ribosomal_uS11_sf"/>
</dbReference>
<dbReference type="NCBIfam" id="NF003698">
    <property type="entry name" value="PRK05309.1"/>
    <property type="match status" value="1"/>
</dbReference>
<dbReference type="NCBIfam" id="TIGR03632">
    <property type="entry name" value="uS11_bact"/>
    <property type="match status" value="1"/>
</dbReference>
<dbReference type="PANTHER" id="PTHR11759">
    <property type="entry name" value="40S RIBOSOMAL PROTEIN S14/30S RIBOSOMAL PROTEIN S11"/>
    <property type="match status" value="1"/>
</dbReference>
<dbReference type="Pfam" id="PF00411">
    <property type="entry name" value="Ribosomal_S11"/>
    <property type="match status" value="1"/>
</dbReference>
<dbReference type="PIRSF" id="PIRSF002131">
    <property type="entry name" value="Ribosomal_S11"/>
    <property type="match status" value="1"/>
</dbReference>
<dbReference type="SUPFAM" id="SSF53137">
    <property type="entry name" value="Translational machinery components"/>
    <property type="match status" value="1"/>
</dbReference>
<dbReference type="PROSITE" id="PS00054">
    <property type="entry name" value="RIBOSOMAL_S11"/>
    <property type="match status" value="1"/>
</dbReference>
<feature type="chain" id="PRO_0000230433" description="Small ribosomal subunit protein uS11">
    <location>
        <begin position="1"/>
        <end position="127"/>
    </location>
</feature>
<proteinExistence type="inferred from homology"/>
<protein>
    <recommendedName>
        <fullName evidence="1">Small ribosomal subunit protein uS11</fullName>
    </recommendedName>
    <alternativeName>
        <fullName evidence="2">30S ribosomal protein S11</fullName>
    </alternativeName>
</protein>